<feature type="chain" id="PRO_0000172538" description="Phosphatidylglycerol--prolipoprotein diacylglyceryl transferase">
    <location>
        <begin position="1"/>
        <end position="273"/>
    </location>
</feature>
<feature type="transmembrane region" description="Helical" evidence="1">
    <location>
        <begin position="19"/>
        <end position="39"/>
    </location>
</feature>
<feature type="transmembrane region" description="Helical" evidence="1">
    <location>
        <begin position="55"/>
        <end position="75"/>
    </location>
</feature>
<feature type="transmembrane region" description="Helical" evidence="1">
    <location>
        <begin position="90"/>
        <end position="110"/>
    </location>
</feature>
<feature type="transmembrane region" description="Helical" evidence="1">
    <location>
        <begin position="125"/>
        <end position="145"/>
    </location>
</feature>
<feature type="transmembrane region" description="Helical" evidence="1">
    <location>
        <begin position="174"/>
        <end position="194"/>
    </location>
</feature>
<feature type="transmembrane region" description="Helical" evidence="1">
    <location>
        <begin position="202"/>
        <end position="222"/>
    </location>
</feature>
<feature type="transmembrane region" description="Helical" evidence="1">
    <location>
        <begin position="230"/>
        <end position="250"/>
    </location>
</feature>
<feature type="binding site" evidence="1">
    <location>
        <position position="138"/>
    </location>
    <ligand>
        <name>a 1,2-diacyl-sn-glycero-3-phospho-(1'-sn-glycerol)</name>
        <dbReference type="ChEBI" id="CHEBI:64716"/>
    </ligand>
</feature>
<keyword id="KW-0997">Cell inner membrane</keyword>
<keyword id="KW-1003">Cell membrane</keyword>
<keyword id="KW-0472">Membrane</keyword>
<keyword id="KW-0808">Transferase</keyword>
<keyword id="KW-0812">Transmembrane</keyword>
<keyword id="KW-1133">Transmembrane helix</keyword>
<sequence>MLTYPNIDPVALSLGPLKVHWYGLMYLLAFLCAWGLASYRAKQRDSWTSEMVSDLVFYGALGVVLGGRVGYVLFYEFDKFLANPIWLFQVWTGGMSFHGGFIGVMLAMILWCRKYQKTWFETLDFIAPCVPTGLMFGRIGNFIGAELYGREVQDPNYPFGMIFPTDPFHLVRHPSQIYQAICEGLLLFILLWWFSSKPRPRMAVSALFLMGYGVARFVVEFFREPDADQGFILFGWMTKGQILTVPMLLIGLWMIWYAYQRKVYDWGPLKTHK</sequence>
<comment type="function">
    <text evidence="1">Catalyzes the transfer of the diacylglyceryl group from phosphatidylglycerol to the sulfhydryl group of the N-terminal cysteine of a prolipoprotein, the first step in the formation of mature lipoproteins.</text>
</comment>
<comment type="catalytic activity">
    <reaction evidence="1">
        <text>L-cysteinyl-[prolipoprotein] + a 1,2-diacyl-sn-glycero-3-phospho-(1'-sn-glycerol) = an S-1,2-diacyl-sn-glyceryl-L-cysteinyl-[prolipoprotein] + sn-glycerol 1-phosphate + H(+)</text>
        <dbReference type="Rhea" id="RHEA:56712"/>
        <dbReference type="Rhea" id="RHEA-COMP:14679"/>
        <dbReference type="Rhea" id="RHEA-COMP:14680"/>
        <dbReference type="ChEBI" id="CHEBI:15378"/>
        <dbReference type="ChEBI" id="CHEBI:29950"/>
        <dbReference type="ChEBI" id="CHEBI:57685"/>
        <dbReference type="ChEBI" id="CHEBI:64716"/>
        <dbReference type="ChEBI" id="CHEBI:140658"/>
        <dbReference type="EC" id="2.5.1.145"/>
    </reaction>
</comment>
<comment type="pathway">
    <text evidence="1">Protein modification; lipoprotein biosynthesis (diacylglyceryl transfer).</text>
</comment>
<comment type="subcellular location">
    <subcellularLocation>
        <location evidence="1">Cell inner membrane</location>
        <topology evidence="1">Multi-pass membrane protein</topology>
    </subcellularLocation>
</comment>
<comment type="similarity">
    <text evidence="1">Belongs to the Lgt family.</text>
</comment>
<evidence type="ECO:0000255" key="1">
    <source>
        <dbReference type="HAMAP-Rule" id="MF_01147"/>
    </source>
</evidence>
<gene>
    <name evidence="1" type="primary">lgt</name>
    <name type="ordered locus">ACIAD0518</name>
</gene>
<proteinExistence type="inferred from homology"/>
<name>LGT_ACIAD</name>
<reference key="1">
    <citation type="journal article" date="2004" name="Nucleic Acids Res.">
        <title>Unique features revealed by the genome sequence of Acinetobacter sp. ADP1, a versatile and naturally transformation competent bacterium.</title>
        <authorList>
            <person name="Barbe V."/>
            <person name="Vallenet D."/>
            <person name="Fonknechten N."/>
            <person name="Kreimeyer A."/>
            <person name="Oztas S."/>
            <person name="Labarre L."/>
            <person name="Cruveiller S."/>
            <person name="Robert C."/>
            <person name="Duprat S."/>
            <person name="Wincker P."/>
            <person name="Ornston L.N."/>
            <person name="Weissenbach J."/>
            <person name="Marliere P."/>
            <person name="Cohen G.N."/>
            <person name="Medigue C."/>
        </authorList>
    </citation>
    <scope>NUCLEOTIDE SEQUENCE [LARGE SCALE GENOMIC DNA]</scope>
    <source>
        <strain>ATCC 33305 / BD413 / ADP1</strain>
    </source>
</reference>
<dbReference type="EC" id="2.5.1.145" evidence="1"/>
<dbReference type="EMBL" id="CR543861">
    <property type="protein sequence ID" value="CAG67444.1"/>
    <property type="molecule type" value="Genomic_DNA"/>
</dbReference>
<dbReference type="RefSeq" id="WP_004920114.1">
    <property type="nucleotide sequence ID" value="NC_005966.1"/>
</dbReference>
<dbReference type="SMR" id="Q6FER4"/>
<dbReference type="STRING" id="202950.GCA_001485005_00757"/>
<dbReference type="GeneID" id="45232998"/>
<dbReference type="KEGG" id="aci:ACIAD0518"/>
<dbReference type="eggNOG" id="COG0682">
    <property type="taxonomic scope" value="Bacteria"/>
</dbReference>
<dbReference type="HOGENOM" id="CLU_013386_1_0_6"/>
<dbReference type="OrthoDB" id="871140at2"/>
<dbReference type="BioCyc" id="ASP62977:ACIAD_RS02350-MONOMER"/>
<dbReference type="UniPathway" id="UPA00664"/>
<dbReference type="Proteomes" id="UP000000430">
    <property type="component" value="Chromosome"/>
</dbReference>
<dbReference type="GO" id="GO:0005886">
    <property type="term" value="C:plasma membrane"/>
    <property type="evidence" value="ECO:0007669"/>
    <property type="project" value="UniProtKB-SubCell"/>
</dbReference>
<dbReference type="GO" id="GO:0008961">
    <property type="term" value="F:phosphatidylglycerol-prolipoprotein diacylglyceryl transferase activity"/>
    <property type="evidence" value="ECO:0007669"/>
    <property type="project" value="UniProtKB-UniRule"/>
</dbReference>
<dbReference type="GO" id="GO:0042158">
    <property type="term" value="P:lipoprotein biosynthetic process"/>
    <property type="evidence" value="ECO:0007669"/>
    <property type="project" value="UniProtKB-UniRule"/>
</dbReference>
<dbReference type="HAMAP" id="MF_01147">
    <property type="entry name" value="Lgt"/>
    <property type="match status" value="1"/>
</dbReference>
<dbReference type="InterPro" id="IPR001640">
    <property type="entry name" value="Lgt"/>
</dbReference>
<dbReference type="NCBIfam" id="TIGR00544">
    <property type="entry name" value="lgt"/>
    <property type="match status" value="1"/>
</dbReference>
<dbReference type="PANTHER" id="PTHR30589:SF0">
    <property type="entry name" value="PHOSPHATIDYLGLYCEROL--PROLIPOPROTEIN DIACYLGLYCERYL TRANSFERASE"/>
    <property type="match status" value="1"/>
</dbReference>
<dbReference type="PANTHER" id="PTHR30589">
    <property type="entry name" value="PROLIPOPROTEIN DIACYLGLYCERYL TRANSFERASE"/>
    <property type="match status" value="1"/>
</dbReference>
<dbReference type="Pfam" id="PF01790">
    <property type="entry name" value="LGT"/>
    <property type="match status" value="1"/>
</dbReference>
<dbReference type="PROSITE" id="PS01311">
    <property type="entry name" value="LGT"/>
    <property type="match status" value="1"/>
</dbReference>
<protein>
    <recommendedName>
        <fullName evidence="1">Phosphatidylglycerol--prolipoprotein diacylglyceryl transferase</fullName>
        <ecNumber evidence="1">2.5.1.145</ecNumber>
    </recommendedName>
</protein>
<organism>
    <name type="scientific">Acinetobacter baylyi (strain ATCC 33305 / BD413 / ADP1)</name>
    <dbReference type="NCBI Taxonomy" id="62977"/>
    <lineage>
        <taxon>Bacteria</taxon>
        <taxon>Pseudomonadati</taxon>
        <taxon>Pseudomonadota</taxon>
        <taxon>Gammaproteobacteria</taxon>
        <taxon>Moraxellales</taxon>
        <taxon>Moraxellaceae</taxon>
        <taxon>Acinetobacter</taxon>
    </lineage>
</organism>
<accession>Q6FER4</accession>